<sequence>MAAKIRRDDEVIVLTGKDKGKRGKVKNVLSSGKVIVEGINLVKKHQKPVPALNQPGGIVEKEAAIQVSNVAIFNAATGKADRVGFRFEDGKKVRFFKSNSETIK</sequence>
<proteinExistence type="inferred from homology"/>
<feature type="chain" id="PRO_1000142038" description="Large ribosomal subunit protein uL24">
    <location>
        <begin position="1"/>
        <end position="104"/>
    </location>
</feature>
<name>RL24_SALSV</name>
<reference key="1">
    <citation type="journal article" date="2011" name="J. Bacteriol.">
        <title>Comparative genomics of 28 Salmonella enterica isolates: evidence for CRISPR-mediated adaptive sublineage evolution.</title>
        <authorList>
            <person name="Fricke W.F."/>
            <person name="Mammel M.K."/>
            <person name="McDermott P.F."/>
            <person name="Tartera C."/>
            <person name="White D.G."/>
            <person name="Leclerc J.E."/>
            <person name="Ravel J."/>
            <person name="Cebula T.A."/>
        </authorList>
    </citation>
    <scope>NUCLEOTIDE SEQUENCE [LARGE SCALE GENOMIC DNA]</scope>
    <source>
        <strain>CVM19633</strain>
    </source>
</reference>
<organism>
    <name type="scientific">Salmonella schwarzengrund (strain CVM19633)</name>
    <dbReference type="NCBI Taxonomy" id="439843"/>
    <lineage>
        <taxon>Bacteria</taxon>
        <taxon>Pseudomonadati</taxon>
        <taxon>Pseudomonadota</taxon>
        <taxon>Gammaproteobacteria</taxon>
        <taxon>Enterobacterales</taxon>
        <taxon>Enterobacteriaceae</taxon>
        <taxon>Salmonella</taxon>
    </lineage>
</organism>
<comment type="function">
    <text evidence="1">One of two assembly initiator proteins, it binds directly to the 5'-end of the 23S rRNA, where it nucleates assembly of the 50S subunit.</text>
</comment>
<comment type="function">
    <text evidence="1">One of the proteins that surrounds the polypeptide exit tunnel on the outside of the subunit.</text>
</comment>
<comment type="subunit">
    <text evidence="1">Part of the 50S ribosomal subunit.</text>
</comment>
<comment type="similarity">
    <text evidence="1">Belongs to the universal ribosomal protein uL24 family.</text>
</comment>
<accession>B4TXD1</accession>
<dbReference type="EMBL" id="CP001127">
    <property type="protein sequence ID" value="ACF91737.1"/>
    <property type="molecule type" value="Genomic_DNA"/>
</dbReference>
<dbReference type="RefSeq" id="WP_000729185.1">
    <property type="nucleotide sequence ID" value="NC_011094.1"/>
</dbReference>
<dbReference type="SMR" id="B4TXD1"/>
<dbReference type="GeneID" id="93778678"/>
<dbReference type="KEGG" id="sew:SeSA_A3625"/>
<dbReference type="HOGENOM" id="CLU_093315_2_2_6"/>
<dbReference type="Proteomes" id="UP000001865">
    <property type="component" value="Chromosome"/>
</dbReference>
<dbReference type="GO" id="GO:0005829">
    <property type="term" value="C:cytosol"/>
    <property type="evidence" value="ECO:0007669"/>
    <property type="project" value="UniProtKB-ARBA"/>
</dbReference>
<dbReference type="GO" id="GO:1990904">
    <property type="term" value="C:ribonucleoprotein complex"/>
    <property type="evidence" value="ECO:0007669"/>
    <property type="project" value="UniProtKB-KW"/>
</dbReference>
<dbReference type="GO" id="GO:0005840">
    <property type="term" value="C:ribosome"/>
    <property type="evidence" value="ECO:0007669"/>
    <property type="project" value="UniProtKB-KW"/>
</dbReference>
<dbReference type="GO" id="GO:0019843">
    <property type="term" value="F:rRNA binding"/>
    <property type="evidence" value="ECO:0007669"/>
    <property type="project" value="UniProtKB-UniRule"/>
</dbReference>
<dbReference type="GO" id="GO:0003735">
    <property type="term" value="F:structural constituent of ribosome"/>
    <property type="evidence" value="ECO:0007669"/>
    <property type="project" value="InterPro"/>
</dbReference>
<dbReference type="GO" id="GO:0006412">
    <property type="term" value="P:translation"/>
    <property type="evidence" value="ECO:0007669"/>
    <property type="project" value="UniProtKB-UniRule"/>
</dbReference>
<dbReference type="CDD" id="cd06089">
    <property type="entry name" value="KOW_RPL26"/>
    <property type="match status" value="1"/>
</dbReference>
<dbReference type="FunFam" id="2.30.30.30:FF:000004">
    <property type="entry name" value="50S ribosomal protein L24"/>
    <property type="match status" value="1"/>
</dbReference>
<dbReference type="Gene3D" id="2.30.30.30">
    <property type="match status" value="1"/>
</dbReference>
<dbReference type="HAMAP" id="MF_01326_B">
    <property type="entry name" value="Ribosomal_uL24_B"/>
    <property type="match status" value="1"/>
</dbReference>
<dbReference type="InterPro" id="IPR005824">
    <property type="entry name" value="KOW"/>
</dbReference>
<dbReference type="InterPro" id="IPR014722">
    <property type="entry name" value="Rib_uL2_dom2"/>
</dbReference>
<dbReference type="InterPro" id="IPR003256">
    <property type="entry name" value="Ribosomal_uL24"/>
</dbReference>
<dbReference type="InterPro" id="IPR005825">
    <property type="entry name" value="Ribosomal_uL24_CS"/>
</dbReference>
<dbReference type="InterPro" id="IPR041988">
    <property type="entry name" value="Ribosomal_uL24_KOW"/>
</dbReference>
<dbReference type="InterPro" id="IPR008991">
    <property type="entry name" value="Translation_prot_SH3-like_sf"/>
</dbReference>
<dbReference type="NCBIfam" id="TIGR01079">
    <property type="entry name" value="rplX_bact"/>
    <property type="match status" value="1"/>
</dbReference>
<dbReference type="PANTHER" id="PTHR12903">
    <property type="entry name" value="MITOCHONDRIAL RIBOSOMAL PROTEIN L24"/>
    <property type="match status" value="1"/>
</dbReference>
<dbReference type="Pfam" id="PF00467">
    <property type="entry name" value="KOW"/>
    <property type="match status" value="1"/>
</dbReference>
<dbReference type="Pfam" id="PF17136">
    <property type="entry name" value="ribosomal_L24"/>
    <property type="match status" value="1"/>
</dbReference>
<dbReference type="SMART" id="SM00739">
    <property type="entry name" value="KOW"/>
    <property type="match status" value="1"/>
</dbReference>
<dbReference type="SUPFAM" id="SSF50104">
    <property type="entry name" value="Translation proteins SH3-like domain"/>
    <property type="match status" value="1"/>
</dbReference>
<dbReference type="PROSITE" id="PS01108">
    <property type="entry name" value="RIBOSOMAL_L24"/>
    <property type="match status" value="1"/>
</dbReference>
<keyword id="KW-0687">Ribonucleoprotein</keyword>
<keyword id="KW-0689">Ribosomal protein</keyword>
<keyword id="KW-0694">RNA-binding</keyword>
<keyword id="KW-0699">rRNA-binding</keyword>
<evidence type="ECO:0000255" key="1">
    <source>
        <dbReference type="HAMAP-Rule" id="MF_01326"/>
    </source>
</evidence>
<evidence type="ECO:0000305" key="2"/>
<protein>
    <recommendedName>
        <fullName evidence="1">Large ribosomal subunit protein uL24</fullName>
    </recommendedName>
    <alternativeName>
        <fullName evidence="2">50S ribosomal protein L24</fullName>
    </alternativeName>
</protein>
<gene>
    <name evidence="1" type="primary">rplX</name>
    <name type="ordered locus">SeSA_A3625</name>
</gene>